<organism>
    <name type="scientific">Rhodococcus opacus (strain B4)</name>
    <dbReference type="NCBI Taxonomy" id="632772"/>
    <lineage>
        <taxon>Bacteria</taxon>
        <taxon>Bacillati</taxon>
        <taxon>Actinomycetota</taxon>
        <taxon>Actinomycetes</taxon>
        <taxon>Mycobacteriales</taxon>
        <taxon>Nocardiaceae</taxon>
        <taxon>Rhodococcus</taxon>
    </lineage>
</organism>
<evidence type="ECO:0000255" key="1">
    <source>
        <dbReference type="HAMAP-Rule" id="MF_01023"/>
    </source>
</evidence>
<keyword id="KW-0028">Amino-acid biosynthesis</keyword>
<keyword id="KW-0032">Aminotransferase</keyword>
<keyword id="KW-0368">Histidine biosynthesis</keyword>
<keyword id="KW-0663">Pyridoxal phosphate</keyword>
<keyword id="KW-0808">Transferase</keyword>
<name>HIS8_RHOOB</name>
<reference key="1">
    <citation type="submission" date="2009-03" db="EMBL/GenBank/DDBJ databases">
        <title>Comparison of the complete genome sequences of Rhodococcus erythropolis PR4 and Rhodococcus opacus B4.</title>
        <authorList>
            <person name="Takarada H."/>
            <person name="Sekine M."/>
            <person name="Hosoyama A."/>
            <person name="Yamada R."/>
            <person name="Fujisawa T."/>
            <person name="Omata S."/>
            <person name="Shimizu A."/>
            <person name="Tsukatani N."/>
            <person name="Tanikawa S."/>
            <person name="Fujita N."/>
            <person name="Harayama S."/>
        </authorList>
    </citation>
    <scope>NUCLEOTIDE SEQUENCE [LARGE SCALE GENOMIC DNA]</scope>
    <source>
        <strain>B4</strain>
    </source>
</reference>
<comment type="catalytic activity">
    <reaction evidence="1">
        <text>L-histidinol phosphate + 2-oxoglutarate = 3-(imidazol-4-yl)-2-oxopropyl phosphate + L-glutamate</text>
        <dbReference type="Rhea" id="RHEA:23744"/>
        <dbReference type="ChEBI" id="CHEBI:16810"/>
        <dbReference type="ChEBI" id="CHEBI:29985"/>
        <dbReference type="ChEBI" id="CHEBI:57766"/>
        <dbReference type="ChEBI" id="CHEBI:57980"/>
        <dbReference type="EC" id="2.6.1.9"/>
    </reaction>
</comment>
<comment type="cofactor">
    <cofactor evidence="1">
        <name>pyridoxal 5'-phosphate</name>
        <dbReference type="ChEBI" id="CHEBI:597326"/>
    </cofactor>
</comment>
<comment type="pathway">
    <text evidence="1">Amino-acid biosynthesis; L-histidine biosynthesis; L-histidine from 5-phospho-alpha-D-ribose 1-diphosphate: step 7/9.</text>
</comment>
<comment type="subunit">
    <text evidence="1">Homodimer.</text>
</comment>
<comment type="similarity">
    <text evidence="1">Belongs to the class-II pyridoxal-phosphate-dependent aminotransferase family. Histidinol-phosphate aminotransferase subfamily.</text>
</comment>
<feature type="chain" id="PRO_1000149110" description="Histidinol-phosphate aminotransferase">
    <location>
        <begin position="1"/>
        <end position="380"/>
    </location>
</feature>
<feature type="modified residue" description="N6-(pyridoxal phosphate)lysine" evidence="1">
    <location>
        <position position="235"/>
    </location>
</feature>
<proteinExistence type="inferred from homology"/>
<sequence>MTAANVPGSSIGVDALPIRENLRGKSAYGAPQLTVPVQLNTNENPHPPTKALVDDVAESVREAARELHRYPDRDAVALRTDLAAYLVRQTGVPVTVDNVWAANGSNEILQQLLQAFGGPGRSAMGFVPSYSMHPIIADGTETEWLPIFRRADFALDVDAATAAIAERRPDVVFVTSPNNPTGHSVGIAELRRVLDSAPGIVIVDEAYAEFSDAPSALTLIDEYPSKLVVSRTMSKAFAFAGGRLGYLAAAPAFIEALLLVRLPYHLSVVTQAAARAALRHANETLGSVHALAAERVRVSKALEDTGFHVIPSDANFILFGEFTDSARAWQAYLDRGVLIRDVGIPGYLRATVGLASENDAFIVASDEIAATELTSSGDRG</sequence>
<dbReference type="EC" id="2.6.1.9" evidence="1"/>
<dbReference type="EMBL" id="AP011115">
    <property type="protein sequence ID" value="BAH49003.1"/>
    <property type="molecule type" value="Genomic_DNA"/>
</dbReference>
<dbReference type="RefSeq" id="WP_012688000.1">
    <property type="nucleotide sequence ID" value="NC_012522.1"/>
</dbReference>
<dbReference type="SMR" id="C1ATZ5"/>
<dbReference type="STRING" id="632772.ROP_07560"/>
<dbReference type="KEGG" id="rop:ROP_07560"/>
<dbReference type="PATRIC" id="fig|632772.20.peg.819"/>
<dbReference type="HOGENOM" id="CLU_017584_3_1_11"/>
<dbReference type="OrthoDB" id="9809616at2"/>
<dbReference type="UniPathway" id="UPA00031">
    <property type="reaction ID" value="UER00012"/>
</dbReference>
<dbReference type="Proteomes" id="UP000002212">
    <property type="component" value="Chromosome"/>
</dbReference>
<dbReference type="GO" id="GO:0004400">
    <property type="term" value="F:histidinol-phosphate transaminase activity"/>
    <property type="evidence" value="ECO:0007669"/>
    <property type="project" value="UniProtKB-UniRule"/>
</dbReference>
<dbReference type="GO" id="GO:0030170">
    <property type="term" value="F:pyridoxal phosphate binding"/>
    <property type="evidence" value="ECO:0007669"/>
    <property type="project" value="InterPro"/>
</dbReference>
<dbReference type="GO" id="GO:0000105">
    <property type="term" value="P:L-histidine biosynthetic process"/>
    <property type="evidence" value="ECO:0007669"/>
    <property type="project" value="UniProtKB-UniRule"/>
</dbReference>
<dbReference type="CDD" id="cd00609">
    <property type="entry name" value="AAT_like"/>
    <property type="match status" value="1"/>
</dbReference>
<dbReference type="Gene3D" id="3.90.1150.10">
    <property type="entry name" value="Aspartate Aminotransferase, domain 1"/>
    <property type="match status" value="1"/>
</dbReference>
<dbReference type="Gene3D" id="3.40.640.10">
    <property type="entry name" value="Type I PLP-dependent aspartate aminotransferase-like (Major domain)"/>
    <property type="match status" value="1"/>
</dbReference>
<dbReference type="HAMAP" id="MF_01023">
    <property type="entry name" value="HisC_aminotrans_2"/>
    <property type="match status" value="1"/>
</dbReference>
<dbReference type="InterPro" id="IPR001917">
    <property type="entry name" value="Aminotrans_II_pyridoxalP_BS"/>
</dbReference>
<dbReference type="InterPro" id="IPR004839">
    <property type="entry name" value="Aminotransferase_I/II_large"/>
</dbReference>
<dbReference type="InterPro" id="IPR005861">
    <property type="entry name" value="HisP_aminotrans"/>
</dbReference>
<dbReference type="InterPro" id="IPR015424">
    <property type="entry name" value="PyrdxlP-dep_Trfase"/>
</dbReference>
<dbReference type="InterPro" id="IPR015421">
    <property type="entry name" value="PyrdxlP-dep_Trfase_major"/>
</dbReference>
<dbReference type="InterPro" id="IPR015422">
    <property type="entry name" value="PyrdxlP-dep_Trfase_small"/>
</dbReference>
<dbReference type="NCBIfam" id="TIGR01141">
    <property type="entry name" value="hisC"/>
    <property type="match status" value="1"/>
</dbReference>
<dbReference type="NCBIfam" id="NF002877">
    <property type="entry name" value="PRK03317.1"/>
    <property type="match status" value="1"/>
</dbReference>
<dbReference type="PANTHER" id="PTHR42885:SF2">
    <property type="entry name" value="HISTIDINOL-PHOSPHATE AMINOTRANSFERASE"/>
    <property type="match status" value="1"/>
</dbReference>
<dbReference type="PANTHER" id="PTHR42885">
    <property type="entry name" value="HISTIDINOL-PHOSPHATE AMINOTRANSFERASE-RELATED"/>
    <property type="match status" value="1"/>
</dbReference>
<dbReference type="Pfam" id="PF00155">
    <property type="entry name" value="Aminotran_1_2"/>
    <property type="match status" value="1"/>
</dbReference>
<dbReference type="SUPFAM" id="SSF53383">
    <property type="entry name" value="PLP-dependent transferases"/>
    <property type="match status" value="1"/>
</dbReference>
<dbReference type="PROSITE" id="PS00599">
    <property type="entry name" value="AA_TRANSFER_CLASS_2"/>
    <property type="match status" value="1"/>
</dbReference>
<gene>
    <name evidence="1" type="primary">hisC</name>
    <name type="ordered locus">ROP_07560</name>
</gene>
<protein>
    <recommendedName>
        <fullName evidence="1">Histidinol-phosphate aminotransferase</fullName>
        <ecNumber evidence="1">2.6.1.9</ecNumber>
    </recommendedName>
    <alternativeName>
        <fullName evidence="1">Imidazole acetol-phosphate transaminase</fullName>
    </alternativeName>
</protein>
<accession>C1ATZ5</accession>